<gene>
    <name evidence="1" type="primary">guaC</name>
    <name type="ordered locus">Spro_0775</name>
</gene>
<sequence>MRIEEDLKLGFKDVLIRPKRSTLKSRSEVELERQFTFKHSGLSWSGVPIIAANMDSVGTFSMAEALASFDVLTAVHKHYTLEQWAAFVQRVPASVLRHVMVSTGTSEADFVKMQQILALSPGLKFICIDVANGYSEHFVAFLQKAREACPNHVICAGNVVTGEMVEELILSGADIVKVGIGPGSVCTTRVKTGVGYPQLSAVIECADAAHGLGGQIVSDGGCSVPGDVAKAFGGGADFVMLGGMLAGHDECEGTVVEENGEKFMLFYGMSSESAMKRHVGGVAQYRAAEGKTVKLPLRGEVEFTVRDILGGLRSACTYVGAERLKELTKRTTFIRVAEQENRVFGSN</sequence>
<reference key="1">
    <citation type="submission" date="2007-09" db="EMBL/GenBank/DDBJ databases">
        <title>Complete sequence of chromosome of Serratia proteamaculans 568.</title>
        <authorList>
            <consortium name="US DOE Joint Genome Institute"/>
            <person name="Copeland A."/>
            <person name="Lucas S."/>
            <person name="Lapidus A."/>
            <person name="Barry K."/>
            <person name="Glavina del Rio T."/>
            <person name="Dalin E."/>
            <person name="Tice H."/>
            <person name="Pitluck S."/>
            <person name="Chain P."/>
            <person name="Malfatti S."/>
            <person name="Shin M."/>
            <person name="Vergez L."/>
            <person name="Schmutz J."/>
            <person name="Larimer F."/>
            <person name="Land M."/>
            <person name="Hauser L."/>
            <person name="Kyrpides N."/>
            <person name="Kim E."/>
            <person name="Taghavi S."/>
            <person name="Newman L."/>
            <person name="Vangronsveld J."/>
            <person name="van der Lelie D."/>
            <person name="Richardson P."/>
        </authorList>
    </citation>
    <scope>NUCLEOTIDE SEQUENCE [LARGE SCALE GENOMIC DNA]</scope>
    <source>
        <strain>568</strain>
    </source>
</reference>
<keyword id="KW-0479">Metal-binding</keyword>
<keyword id="KW-0521">NADP</keyword>
<keyword id="KW-0560">Oxidoreductase</keyword>
<keyword id="KW-0630">Potassium</keyword>
<comment type="function">
    <text evidence="1">Catalyzes the irreversible NADPH-dependent deamination of GMP to IMP. It functions in the conversion of nucleobase, nucleoside and nucleotide derivatives of G to A nucleotides, and in maintaining the intracellular balance of A and G nucleotides.</text>
</comment>
<comment type="catalytic activity">
    <reaction evidence="1">
        <text>IMP + NH4(+) + NADP(+) = GMP + NADPH + 2 H(+)</text>
        <dbReference type="Rhea" id="RHEA:17185"/>
        <dbReference type="ChEBI" id="CHEBI:15378"/>
        <dbReference type="ChEBI" id="CHEBI:28938"/>
        <dbReference type="ChEBI" id="CHEBI:57783"/>
        <dbReference type="ChEBI" id="CHEBI:58053"/>
        <dbReference type="ChEBI" id="CHEBI:58115"/>
        <dbReference type="ChEBI" id="CHEBI:58349"/>
        <dbReference type="EC" id="1.7.1.7"/>
    </reaction>
</comment>
<comment type="subunit">
    <text evidence="1">Homotetramer.</text>
</comment>
<comment type="similarity">
    <text evidence="1">Belongs to the IMPDH/GMPR family. GuaC type 1 subfamily.</text>
</comment>
<name>GUAC_SERP5</name>
<protein>
    <recommendedName>
        <fullName evidence="1">GMP reductase</fullName>
        <ecNumber evidence="1">1.7.1.7</ecNumber>
    </recommendedName>
    <alternativeName>
        <fullName evidence="1">Guanosine 5'-monophosphate oxidoreductase</fullName>
        <shortName evidence="1">Guanosine monophosphate reductase</shortName>
    </alternativeName>
</protein>
<dbReference type="EC" id="1.7.1.7" evidence="1"/>
<dbReference type="EMBL" id="CP000826">
    <property type="protein sequence ID" value="ABV39881.1"/>
    <property type="molecule type" value="Genomic_DNA"/>
</dbReference>
<dbReference type="SMR" id="A8G9U1"/>
<dbReference type="STRING" id="399741.Spro_0775"/>
<dbReference type="KEGG" id="spe:Spro_0775"/>
<dbReference type="eggNOG" id="COG0516">
    <property type="taxonomic scope" value="Bacteria"/>
</dbReference>
<dbReference type="HOGENOM" id="CLU_022552_5_3_6"/>
<dbReference type="OrthoDB" id="9805398at2"/>
<dbReference type="GO" id="GO:0005829">
    <property type="term" value="C:cytosol"/>
    <property type="evidence" value="ECO:0007669"/>
    <property type="project" value="TreeGrafter"/>
</dbReference>
<dbReference type="GO" id="GO:1902560">
    <property type="term" value="C:GMP reductase complex"/>
    <property type="evidence" value="ECO:0007669"/>
    <property type="project" value="InterPro"/>
</dbReference>
<dbReference type="GO" id="GO:0003920">
    <property type="term" value="F:GMP reductase activity"/>
    <property type="evidence" value="ECO:0007669"/>
    <property type="project" value="UniProtKB-UniRule"/>
</dbReference>
<dbReference type="GO" id="GO:0046872">
    <property type="term" value="F:metal ion binding"/>
    <property type="evidence" value="ECO:0007669"/>
    <property type="project" value="UniProtKB-KW"/>
</dbReference>
<dbReference type="GO" id="GO:0006163">
    <property type="term" value="P:purine nucleotide metabolic process"/>
    <property type="evidence" value="ECO:0007669"/>
    <property type="project" value="UniProtKB-UniRule"/>
</dbReference>
<dbReference type="CDD" id="cd00381">
    <property type="entry name" value="IMPDH"/>
    <property type="match status" value="1"/>
</dbReference>
<dbReference type="FunFam" id="3.20.20.70:FF:000012">
    <property type="entry name" value="GMP reductase"/>
    <property type="match status" value="1"/>
</dbReference>
<dbReference type="Gene3D" id="3.20.20.70">
    <property type="entry name" value="Aldolase class I"/>
    <property type="match status" value="1"/>
</dbReference>
<dbReference type="HAMAP" id="MF_00596">
    <property type="entry name" value="GMP_reduct_type1"/>
    <property type="match status" value="1"/>
</dbReference>
<dbReference type="InterPro" id="IPR013785">
    <property type="entry name" value="Aldolase_TIM"/>
</dbReference>
<dbReference type="InterPro" id="IPR050139">
    <property type="entry name" value="GMP_reductase"/>
</dbReference>
<dbReference type="InterPro" id="IPR005993">
    <property type="entry name" value="GMPR"/>
</dbReference>
<dbReference type="InterPro" id="IPR015875">
    <property type="entry name" value="IMP_DH/GMP_Rdtase_CS"/>
</dbReference>
<dbReference type="InterPro" id="IPR001093">
    <property type="entry name" value="IMP_DH_GMPRt"/>
</dbReference>
<dbReference type="NCBIfam" id="TIGR01305">
    <property type="entry name" value="GMP_reduct_1"/>
    <property type="match status" value="1"/>
</dbReference>
<dbReference type="NCBIfam" id="NF003470">
    <property type="entry name" value="PRK05096.1"/>
    <property type="match status" value="1"/>
</dbReference>
<dbReference type="PANTHER" id="PTHR43170">
    <property type="entry name" value="GMP REDUCTASE"/>
    <property type="match status" value="1"/>
</dbReference>
<dbReference type="PANTHER" id="PTHR43170:SF5">
    <property type="entry name" value="GMP REDUCTASE"/>
    <property type="match status" value="1"/>
</dbReference>
<dbReference type="Pfam" id="PF00478">
    <property type="entry name" value="IMPDH"/>
    <property type="match status" value="1"/>
</dbReference>
<dbReference type="PIRSF" id="PIRSF000235">
    <property type="entry name" value="GMP_reductase"/>
    <property type="match status" value="1"/>
</dbReference>
<dbReference type="SMART" id="SM01240">
    <property type="entry name" value="IMPDH"/>
    <property type="match status" value="1"/>
</dbReference>
<dbReference type="SUPFAM" id="SSF51412">
    <property type="entry name" value="Inosine monophosphate dehydrogenase (IMPDH)"/>
    <property type="match status" value="1"/>
</dbReference>
<dbReference type="PROSITE" id="PS00487">
    <property type="entry name" value="IMP_DH_GMP_RED"/>
    <property type="match status" value="1"/>
</dbReference>
<feature type="chain" id="PRO_1000061238" description="GMP reductase">
    <location>
        <begin position="1"/>
        <end position="347"/>
    </location>
</feature>
<feature type="active site" description="Thioimidate intermediate" evidence="1">
    <location>
        <position position="186"/>
    </location>
</feature>
<feature type="binding site" evidence="1">
    <location>
        <begin position="108"/>
        <end position="131"/>
    </location>
    <ligand>
        <name>NADP(+)</name>
        <dbReference type="ChEBI" id="CHEBI:58349"/>
    </ligand>
</feature>
<feature type="binding site" evidence="1">
    <location>
        <position position="181"/>
    </location>
    <ligand>
        <name>K(+)</name>
        <dbReference type="ChEBI" id="CHEBI:29103"/>
    </ligand>
</feature>
<feature type="binding site" evidence="1">
    <location>
        <position position="183"/>
    </location>
    <ligand>
        <name>K(+)</name>
        <dbReference type="ChEBI" id="CHEBI:29103"/>
    </ligand>
</feature>
<feature type="binding site" evidence="1">
    <location>
        <begin position="216"/>
        <end position="239"/>
    </location>
    <ligand>
        <name>NADP(+)</name>
        <dbReference type="ChEBI" id="CHEBI:58349"/>
    </ligand>
</feature>
<evidence type="ECO:0000255" key="1">
    <source>
        <dbReference type="HAMAP-Rule" id="MF_00596"/>
    </source>
</evidence>
<proteinExistence type="inferred from homology"/>
<organism>
    <name type="scientific">Serratia proteamaculans (strain 568)</name>
    <dbReference type="NCBI Taxonomy" id="399741"/>
    <lineage>
        <taxon>Bacteria</taxon>
        <taxon>Pseudomonadati</taxon>
        <taxon>Pseudomonadota</taxon>
        <taxon>Gammaproteobacteria</taxon>
        <taxon>Enterobacterales</taxon>
        <taxon>Yersiniaceae</taxon>
        <taxon>Serratia</taxon>
    </lineage>
</organism>
<accession>A8G9U1</accession>